<dbReference type="EC" id="7.1.1.2"/>
<dbReference type="EMBL" id="Y11832">
    <property type="protein sequence ID" value="CAA72521.1"/>
    <property type="molecule type" value="Genomic_DNA"/>
</dbReference>
<dbReference type="PIR" id="T11451">
    <property type="entry name" value="T11451"/>
</dbReference>
<dbReference type="RefSeq" id="NP_007469.1">
    <property type="nucleotide sequence ID" value="NC_001821.1"/>
</dbReference>
<dbReference type="SMR" id="O21335"/>
<dbReference type="GeneID" id="808129"/>
<dbReference type="KEGG" id="dnm:808129"/>
<dbReference type="CTD" id="4540"/>
<dbReference type="HOGENOM" id="CLU_007100_6_0_1"/>
<dbReference type="OMA" id="GVGIMSF"/>
<dbReference type="GO" id="GO:0005743">
    <property type="term" value="C:mitochondrial inner membrane"/>
    <property type="evidence" value="ECO:0007669"/>
    <property type="project" value="UniProtKB-SubCell"/>
</dbReference>
<dbReference type="GO" id="GO:0045271">
    <property type="term" value="C:respiratory chain complex I"/>
    <property type="evidence" value="ECO:0007669"/>
    <property type="project" value="Ensembl"/>
</dbReference>
<dbReference type="GO" id="GO:0008137">
    <property type="term" value="F:NADH dehydrogenase (ubiquinone) activity"/>
    <property type="evidence" value="ECO:0007669"/>
    <property type="project" value="UniProtKB-EC"/>
</dbReference>
<dbReference type="GO" id="GO:0015990">
    <property type="term" value="P:electron transport coupled proton transport"/>
    <property type="evidence" value="ECO:0007669"/>
    <property type="project" value="TreeGrafter"/>
</dbReference>
<dbReference type="GO" id="GO:0006120">
    <property type="term" value="P:mitochondrial electron transport, NADH to ubiquinone"/>
    <property type="evidence" value="ECO:0007669"/>
    <property type="project" value="Ensembl"/>
</dbReference>
<dbReference type="GO" id="GO:0032981">
    <property type="term" value="P:mitochondrial respiratory chain complex I assembly"/>
    <property type="evidence" value="ECO:0007669"/>
    <property type="project" value="Ensembl"/>
</dbReference>
<dbReference type="InterPro" id="IPR010934">
    <property type="entry name" value="NADH_DH_su5_C"/>
</dbReference>
<dbReference type="InterPro" id="IPR018393">
    <property type="entry name" value="NADHpl_OxRdtase_5_subgr"/>
</dbReference>
<dbReference type="InterPro" id="IPR001750">
    <property type="entry name" value="ND/Mrp_TM"/>
</dbReference>
<dbReference type="InterPro" id="IPR003945">
    <property type="entry name" value="NU5C-like"/>
</dbReference>
<dbReference type="InterPro" id="IPR001516">
    <property type="entry name" value="Proton_antipo_N"/>
</dbReference>
<dbReference type="NCBIfam" id="TIGR01974">
    <property type="entry name" value="NDH_I_L"/>
    <property type="match status" value="1"/>
</dbReference>
<dbReference type="PANTHER" id="PTHR42829">
    <property type="entry name" value="NADH-UBIQUINONE OXIDOREDUCTASE CHAIN 5"/>
    <property type="match status" value="1"/>
</dbReference>
<dbReference type="PANTHER" id="PTHR42829:SF2">
    <property type="entry name" value="NADH-UBIQUINONE OXIDOREDUCTASE CHAIN 5"/>
    <property type="match status" value="1"/>
</dbReference>
<dbReference type="Pfam" id="PF06455">
    <property type="entry name" value="NADH5_C"/>
    <property type="match status" value="1"/>
</dbReference>
<dbReference type="Pfam" id="PF00361">
    <property type="entry name" value="Proton_antipo_M"/>
    <property type="match status" value="1"/>
</dbReference>
<dbReference type="Pfam" id="PF00662">
    <property type="entry name" value="Proton_antipo_N"/>
    <property type="match status" value="1"/>
</dbReference>
<dbReference type="PRINTS" id="PR01434">
    <property type="entry name" value="NADHDHGNASE5"/>
</dbReference>
<name>NU5M_DASNO</name>
<accession>O21335</accession>
<keyword id="KW-0249">Electron transport</keyword>
<keyword id="KW-0472">Membrane</keyword>
<keyword id="KW-0496">Mitochondrion</keyword>
<keyword id="KW-0999">Mitochondrion inner membrane</keyword>
<keyword id="KW-0520">NAD</keyword>
<keyword id="KW-0679">Respiratory chain</keyword>
<keyword id="KW-1278">Translocase</keyword>
<keyword id="KW-0812">Transmembrane</keyword>
<keyword id="KW-1133">Transmembrane helix</keyword>
<keyword id="KW-0813">Transport</keyword>
<keyword id="KW-0830">Ubiquinone</keyword>
<organism>
    <name type="scientific">Dasypus novemcinctus</name>
    <name type="common">Nine-banded armadillo</name>
    <dbReference type="NCBI Taxonomy" id="9361"/>
    <lineage>
        <taxon>Eukaryota</taxon>
        <taxon>Metazoa</taxon>
        <taxon>Chordata</taxon>
        <taxon>Craniata</taxon>
        <taxon>Vertebrata</taxon>
        <taxon>Euteleostomi</taxon>
        <taxon>Mammalia</taxon>
        <taxon>Eutheria</taxon>
        <taxon>Xenarthra</taxon>
        <taxon>Cingulata</taxon>
        <taxon>Dasypodidae</taxon>
        <taxon>Dasypus</taxon>
    </lineage>
</organism>
<feature type="chain" id="PRO_0000118086" description="NADH-ubiquinone oxidoreductase chain 5">
    <location>
        <begin position="1"/>
        <end position="601"/>
    </location>
</feature>
<feature type="transmembrane region" description="Helical" evidence="2">
    <location>
        <begin position="3"/>
        <end position="23"/>
    </location>
</feature>
<feature type="transmembrane region" description="Helical" evidence="2">
    <location>
        <begin position="36"/>
        <end position="56"/>
    </location>
</feature>
<feature type="transmembrane region" description="Helical" evidence="2">
    <location>
        <begin position="84"/>
        <end position="104"/>
    </location>
</feature>
<feature type="transmembrane region" description="Helical" evidence="2">
    <location>
        <begin position="114"/>
        <end position="134"/>
    </location>
</feature>
<feature type="transmembrane region" description="Helical" evidence="2">
    <location>
        <begin position="140"/>
        <end position="160"/>
    </location>
</feature>
<feature type="transmembrane region" description="Helical" evidence="2">
    <location>
        <begin position="171"/>
        <end position="191"/>
    </location>
</feature>
<feature type="transmembrane region" description="Helical" evidence="2">
    <location>
        <begin position="201"/>
        <end position="221"/>
    </location>
</feature>
<feature type="transmembrane region" description="Helical" evidence="2">
    <location>
        <begin position="240"/>
        <end position="260"/>
    </location>
</feature>
<feature type="transmembrane region" description="Helical" evidence="2">
    <location>
        <begin position="272"/>
        <end position="292"/>
    </location>
</feature>
<feature type="transmembrane region" description="Helical" evidence="2">
    <location>
        <begin position="324"/>
        <end position="346"/>
    </location>
</feature>
<feature type="transmembrane region" description="Helical" evidence="2">
    <location>
        <begin position="365"/>
        <end position="385"/>
    </location>
</feature>
<feature type="transmembrane region" description="Helical" evidence="2">
    <location>
        <begin position="404"/>
        <end position="426"/>
    </location>
</feature>
<feature type="transmembrane region" description="Helical" evidence="2">
    <location>
        <begin position="456"/>
        <end position="476"/>
    </location>
</feature>
<feature type="transmembrane region" description="Helical" evidence="2">
    <location>
        <begin position="483"/>
        <end position="503"/>
    </location>
</feature>
<feature type="transmembrane region" description="Helical" evidence="2">
    <location>
        <begin position="581"/>
        <end position="601"/>
    </location>
</feature>
<evidence type="ECO:0000250" key="1"/>
<evidence type="ECO:0000255" key="2"/>
<evidence type="ECO:0000305" key="3"/>
<sequence length="601" mass="67584">MNLIMPFSIITLTILTIPIMMSYTNKYKTKSYPYHVTSSVSYAFMTSMIPTMMFLLSNQDSYISNWHWMTMQTMKLSLSFKLDFFSIIFVSVALFVTWSIMEFSLWYMHSDPYINQFFKYLLLFLITMMILVTANNMFQLFIGWEGVGIMSFLLIGWWYGRTDANTAALQAILYNRIGDIGFILTMAWLLLHLNSWDLQQIFMLKPTNLLPLLGLLVAAAGKSAQFGLHPWLPSAMEGPTPVSALLHSSTMVVAGIFLLVRFYPLMQNNPTILTMTLCLGAITTLFTAICALTQNDIKKIIAFSTSSQLGLMMVTIGINQPHLAFLHICTHAFFKAMLFMCSGSIIHSLNNEQDIRKMGGLLKAMPFTSSCLMIGSLALTGMPFLTGFYSKDLIIESANTSYSNAWALLITLLATSFTASYSTRLIYFSSLGPPRYLPLITINENNPNLLKPIKRLALGSIFAGFLISNYIPPLITPQTTMPLYMKLSALAVTIMGFMVAMGLNNITLNLKPERPNPLHSFSSLLGYYPNIIHRTTPYYILMMSQNLASLTDILWLEKLAPKSLSQMQLSASMITSNQKGLIKLYFMSFIISMTLATMLII</sequence>
<proteinExistence type="inferred from homology"/>
<reference key="1">
    <citation type="journal article" date="1997" name="Mol. Biol. Evol.">
        <title>Phylogenetic analyses of mitochondrial DNA suggest a sister group relationship between Xenarthra (Edentata) and Ferungulates.</title>
        <authorList>
            <person name="Arnason U."/>
            <person name="Gullberg A."/>
            <person name="Janke A."/>
        </authorList>
    </citation>
    <scope>NUCLEOTIDE SEQUENCE [GENOMIC DNA]</scope>
</reference>
<protein>
    <recommendedName>
        <fullName>NADH-ubiquinone oxidoreductase chain 5</fullName>
        <ecNumber>7.1.1.2</ecNumber>
    </recommendedName>
    <alternativeName>
        <fullName>NADH dehydrogenase subunit 5</fullName>
    </alternativeName>
</protein>
<comment type="function">
    <text evidence="1">Core subunit of the mitochondrial membrane respiratory chain NADH dehydrogenase (Complex I) that is believed to belong to the minimal assembly required for catalysis. Complex I functions in the transfer of electrons from NADH to the respiratory chain. The immediate electron acceptor for the enzyme is believed to be ubiquinone (By similarity).</text>
</comment>
<comment type="catalytic activity">
    <reaction>
        <text>a ubiquinone + NADH + 5 H(+)(in) = a ubiquinol + NAD(+) + 4 H(+)(out)</text>
        <dbReference type="Rhea" id="RHEA:29091"/>
        <dbReference type="Rhea" id="RHEA-COMP:9565"/>
        <dbReference type="Rhea" id="RHEA-COMP:9566"/>
        <dbReference type="ChEBI" id="CHEBI:15378"/>
        <dbReference type="ChEBI" id="CHEBI:16389"/>
        <dbReference type="ChEBI" id="CHEBI:17976"/>
        <dbReference type="ChEBI" id="CHEBI:57540"/>
        <dbReference type="ChEBI" id="CHEBI:57945"/>
        <dbReference type="EC" id="7.1.1.2"/>
    </reaction>
</comment>
<comment type="subcellular location">
    <subcellularLocation>
        <location evidence="1">Mitochondrion inner membrane</location>
        <topology evidence="1">Multi-pass membrane protein</topology>
    </subcellularLocation>
</comment>
<comment type="similarity">
    <text evidence="3">Belongs to the complex I subunit 5 family.</text>
</comment>
<geneLocation type="mitochondrion"/>
<gene>
    <name type="primary">MT-ND5</name>
    <name type="synonym">MTND5</name>
    <name type="synonym">NADH5</name>
    <name type="synonym">ND5</name>
</gene>